<feature type="chain" id="PRO_0000363269" description="Putative protein phosphatase 2C 23">
    <location>
        <begin position="1"/>
        <end position="319"/>
    </location>
</feature>
<feature type="domain" description="PPM-type phosphatase" evidence="2">
    <location>
        <begin position="73"/>
        <end position="314"/>
    </location>
</feature>
<feature type="binding site" evidence="1">
    <location>
        <position position="102"/>
    </location>
    <ligand>
        <name>Mn(2+)</name>
        <dbReference type="ChEBI" id="CHEBI:29035"/>
        <label>1</label>
    </ligand>
</feature>
<feature type="binding site" evidence="1">
    <location>
        <position position="235"/>
    </location>
    <ligand>
        <name>Mn(2+)</name>
        <dbReference type="ChEBI" id="CHEBI:29035"/>
        <label>2</label>
    </ligand>
</feature>
<feature type="binding site" evidence="1">
    <location>
        <position position="305"/>
    </location>
    <ligand>
        <name>Mn(2+)</name>
        <dbReference type="ChEBI" id="CHEBI:29035"/>
        <label>2</label>
    </ligand>
</feature>
<reference key="1">
    <citation type="journal article" date="2005" name="Nature">
        <title>The map-based sequence of the rice genome.</title>
        <authorList>
            <consortium name="International rice genome sequencing project (IRGSP)"/>
        </authorList>
    </citation>
    <scope>NUCLEOTIDE SEQUENCE [LARGE SCALE GENOMIC DNA]</scope>
    <source>
        <strain>cv. Nipponbare</strain>
    </source>
</reference>
<reference key="2">
    <citation type="journal article" date="2013" name="Rice">
        <title>Improvement of the Oryza sativa Nipponbare reference genome using next generation sequence and optical map data.</title>
        <authorList>
            <person name="Kawahara Y."/>
            <person name="de la Bastide M."/>
            <person name="Hamilton J.P."/>
            <person name="Kanamori H."/>
            <person name="McCombie W.R."/>
            <person name="Ouyang S."/>
            <person name="Schwartz D.C."/>
            <person name="Tanaka T."/>
            <person name="Wu J."/>
            <person name="Zhou S."/>
            <person name="Childs K.L."/>
            <person name="Davidson R.M."/>
            <person name="Lin H."/>
            <person name="Quesada-Ocampo L."/>
            <person name="Vaillancourt B."/>
            <person name="Sakai H."/>
            <person name="Lee S.S."/>
            <person name="Kim J."/>
            <person name="Numa H."/>
            <person name="Itoh T."/>
            <person name="Buell C.R."/>
            <person name="Matsumoto T."/>
        </authorList>
    </citation>
    <scope>GENOME REANNOTATION</scope>
    <source>
        <strain>cv. Nipponbare</strain>
    </source>
</reference>
<reference key="3">
    <citation type="journal article" date="2008" name="BMC Genomics">
        <title>Genome-wide and expression analysis of protein phosphatase 2C in rice and Arabidopsis.</title>
        <authorList>
            <person name="Xue T."/>
            <person name="Wang D."/>
            <person name="Zhang S."/>
            <person name="Ehlting J."/>
            <person name="Ni F."/>
            <person name="Jacab S."/>
            <person name="Zheng C."/>
            <person name="Zhong Y."/>
        </authorList>
    </citation>
    <scope>GENE FAMILY</scope>
    <scope>NOMENCLATURE</scope>
</reference>
<dbReference type="EC" id="3.1.3.16"/>
<dbReference type="EMBL" id="AP004192">
    <property type="protein sequence ID" value="BAD25305.1"/>
    <property type="molecule type" value="Genomic_DNA"/>
</dbReference>
<dbReference type="EMBL" id="AP014958">
    <property type="protein sequence ID" value="BAS79925.1"/>
    <property type="molecule type" value="Genomic_DNA"/>
</dbReference>
<dbReference type="SMR" id="Q6H7J4"/>
<dbReference type="FunCoup" id="Q6H7J4">
    <property type="interactions" value="1"/>
</dbReference>
<dbReference type="STRING" id="39947.Q6H7J4"/>
<dbReference type="PaxDb" id="39947-Q6H7J4"/>
<dbReference type="EnsemblPlants" id="Os02t0633700-00">
    <property type="protein sequence ID" value="Os02t0633700-00"/>
    <property type="gene ID" value="Os02g0633700"/>
</dbReference>
<dbReference type="GeneID" id="107275989"/>
<dbReference type="Gramene" id="Os02t0633700-00">
    <property type="protein sequence ID" value="Os02t0633700-00"/>
    <property type="gene ID" value="Os02g0633700"/>
</dbReference>
<dbReference type="KEGG" id="osa:107275989"/>
<dbReference type="eggNOG" id="KOG1379">
    <property type="taxonomic scope" value="Eukaryota"/>
</dbReference>
<dbReference type="HOGENOM" id="CLU_029404_3_1_1"/>
<dbReference type="InParanoid" id="Q6H7J4"/>
<dbReference type="OMA" id="ANPATCG"/>
<dbReference type="OrthoDB" id="681748at2759"/>
<dbReference type="Proteomes" id="UP000000763">
    <property type="component" value="Chromosome 2"/>
</dbReference>
<dbReference type="Proteomes" id="UP000059680">
    <property type="component" value="Chromosome 2"/>
</dbReference>
<dbReference type="GO" id="GO:0046872">
    <property type="term" value="F:metal ion binding"/>
    <property type="evidence" value="ECO:0007669"/>
    <property type="project" value="UniProtKB-KW"/>
</dbReference>
<dbReference type="GO" id="GO:0004722">
    <property type="term" value="F:protein serine/threonine phosphatase activity"/>
    <property type="evidence" value="ECO:0000318"/>
    <property type="project" value="GO_Central"/>
</dbReference>
<dbReference type="Gene3D" id="3.60.40.10">
    <property type="entry name" value="PPM-type phosphatase domain"/>
    <property type="match status" value="1"/>
</dbReference>
<dbReference type="InterPro" id="IPR036457">
    <property type="entry name" value="PPM-type-like_dom_sf"/>
</dbReference>
<dbReference type="InterPro" id="IPR001932">
    <property type="entry name" value="PPM-type_phosphatase-like_dom"/>
</dbReference>
<dbReference type="InterPro" id="IPR039123">
    <property type="entry name" value="PPTC7"/>
</dbReference>
<dbReference type="PANTHER" id="PTHR12320">
    <property type="entry name" value="PROTEIN PHOSPHATASE 2C"/>
    <property type="match status" value="1"/>
</dbReference>
<dbReference type="PANTHER" id="PTHR12320:SF81">
    <property type="entry name" value="PROTEIN PHOSPHATASE 2C 23-RELATED"/>
    <property type="match status" value="1"/>
</dbReference>
<dbReference type="SMART" id="SM00332">
    <property type="entry name" value="PP2Cc"/>
    <property type="match status" value="1"/>
</dbReference>
<dbReference type="SUPFAM" id="SSF81606">
    <property type="entry name" value="PP2C-like"/>
    <property type="match status" value="1"/>
</dbReference>
<dbReference type="PROSITE" id="PS51746">
    <property type="entry name" value="PPM_2"/>
    <property type="match status" value="1"/>
</dbReference>
<comment type="catalytic activity">
    <reaction>
        <text>O-phospho-L-seryl-[protein] + H2O = L-seryl-[protein] + phosphate</text>
        <dbReference type="Rhea" id="RHEA:20629"/>
        <dbReference type="Rhea" id="RHEA-COMP:9863"/>
        <dbReference type="Rhea" id="RHEA-COMP:11604"/>
        <dbReference type="ChEBI" id="CHEBI:15377"/>
        <dbReference type="ChEBI" id="CHEBI:29999"/>
        <dbReference type="ChEBI" id="CHEBI:43474"/>
        <dbReference type="ChEBI" id="CHEBI:83421"/>
        <dbReference type="EC" id="3.1.3.16"/>
    </reaction>
</comment>
<comment type="catalytic activity">
    <reaction>
        <text>O-phospho-L-threonyl-[protein] + H2O = L-threonyl-[protein] + phosphate</text>
        <dbReference type="Rhea" id="RHEA:47004"/>
        <dbReference type="Rhea" id="RHEA-COMP:11060"/>
        <dbReference type="Rhea" id="RHEA-COMP:11605"/>
        <dbReference type="ChEBI" id="CHEBI:15377"/>
        <dbReference type="ChEBI" id="CHEBI:30013"/>
        <dbReference type="ChEBI" id="CHEBI:43474"/>
        <dbReference type="ChEBI" id="CHEBI:61977"/>
        <dbReference type="EC" id="3.1.3.16"/>
    </reaction>
</comment>
<comment type="cofactor">
    <cofactor evidence="1">
        <name>Mg(2+)</name>
        <dbReference type="ChEBI" id="CHEBI:18420"/>
    </cofactor>
    <text evidence="1">Binds 2 magnesium ions per subunit.</text>
</comment>
<comment type="similarity">
    <text evidence="3">Belongs to the PP2C family.</text>
</comment>
<comment type="caution">
    <text evidence="3">Although related to the protein phosphatase 2C family, lacks 1 of the conserved residues that bind manganese, suggesting it has no phosphatase activity.</text>
</comment>
<comment type="caution">
    <text evidence="3">Could be the product of a pseudogene.</text>
</comment>
<evidence type="ECO:0000250" key="1"/>
<evidence type="ECO:0000255" key="2">
    <source>
        <dbReference type="PROSITE-ProRule" id="PRU01082"/>
    </source>
</evidence>
<evidence type="ECO:0000305" key="3"/>
<name>P2C23_ORYSJ</name>
<gene>
    <name type="ordered locus">Os02g0633700</name>
    <name type="ordered locus">LOC_Os02g42250</name>
    <name type="ORF">OJ1643_A10.22</name>
</gene>
<keyword id="KW-0378">Hydrolase</keyword>
<keyword id="KW-0460">Magnesium</keyword>
<keyword id="KW-0464">Manganese</keyword>
<keyword id="KW-0479">Metal-binding</keyword>
<keyword id="KW-0904">Protein phosphatase</keyword>
<keyword id="KW-1185">Reference proteome</keyword>
<protein>
    <recommendedName>
        <fullName>Putative protein phosphatase 2C 23</fullName>
        <shortName>OsPP2C23</shortName>
        <ecNumber>3.1.3.16</ecNumber>
    </recommendedName>
</protein>
<accession>Q6H7J4</accession>
<accession>A0A0P0VM21</accession>
<organism>
    <name type="scientific">Oryza sativa subsp. japonica</name>
    <name type="common">Rice</name>
    <dbReference type="NCBI Taxonomy" id="39947"/>
    <lineage>
        <taxon>Eukaryota</taxon>
        <taxon>Viridiplantae</taxon>
        <taxon>Streptophyta</taxon>
        <taxon>Embryophyta</taxon>
        <taxon>Tracheophyta</taxon>
        <taxon>Spermatophyta</taxon>
        <taxon>Magnoliopsida</taxon>
        <taxon>Liliopsida</taxon>
        <taxon>Poales</taxon>
        <taxon>Poaceae</taxon>
        <taxon>BOP clade</taxon>
        <taxon>Oryzoideae</taxon>
        <taxon>Oryzeae</taxon>
        <taxon>Oryzinae</taxon>
        <taxon>Oryza</taxon>
        <taxon>Oryza sativa</taxon>
    </lineage>
</organism>
<proteinExistence type="uncertain"/>
<sequence length="319" mass="34728">MEKRMETLEQIKETLRETSKLVPDIVRAAVGLEHHYQTVELPHDDGCVKSFAAAFLRPQAQEQAHGDGEVQQAVRMESASCYVPDHDEDAHFVHDAAGVVGGYRRRVGVDAGAFSRGLMTSAFAQLVTAEPGTPVCPYTLLERAYEETLESGAQGGSTAVILSLADGNVLRWAYIGDSAFAVLRDGRVVVRSVQQQRYFNAPYYLGGRRGDEGMTVGMVGEMKVRRGDVVVAGTDGLFDNMSDAELEKVVQIGTALGFSPKNMADIIGGTAYEMSRCLLKDSPFAVEWRKQHENEEGHFYGGKVDDITVVVACIVSSDS</sequence>